<feature type="peptide" id="PRO_0000421646" description="CAPA-Periviscerokinin-2" evidence="3">
    <location>
        <begin position="1"/>
        <end position="19"/>
    </location>
</feature>
<feature type="modified residue" description="Valine amide" evidence="3">
    <location>
        <position position="19"/>
    </location>
</feature>
<accession>B0M3E6</accession>
<keyword id="KW-0027">Amidation</keyword>
<keyword id="KW-0903">Direct protein sequencing</keyword>
<keyword id="KW-0527">Neuropeptide</keyword>
<keyword id="KW-0964">Secreted</keyword>
<comment type="function">
    <text evidence="1">Mediates visceral muscle contractile activity (myotropic activity).</text>
</comment>
<comment type="subcellular location">
    <subcellularLocation>
        <location evidence="6">Secreted</location>
    </subcellularLocation>
</comment>
<comment type="similarity">
    <text evidence="2">Belongs to the periviscerokinin family.</text>
</comment>
<evidence type="ECO:0000250" key="1">
    <source>
        <dbReference type="UniProtKB" id="P83923"/>
    </source>
</evidence>
<evidence type="ECO:0000255" key="2"/>
<evidence type="ECO:0000269" key="3">
    <source>
    </source>
</evidence>
<evidence type="ECO:0000303" key="4">
    <source>
    </source>
</evidence>
<evidence type="ECO:0000305" key="5"/>
<evidence type="ECO:0000305" key="6">
    <source>
    </source>
</evidence>
<organism>
    <name type="scientific">Karoophasma botterkloofense</name>
    <name type="common">Gladiator</name>
    <name type="synonym">Heel-walker</name>
    <dbReference type="NCBI Taxonomy" id="253132"/>
    <lineage>
        <taxon>Eukaryota</taxon>
        <taxon>Metazoa</taxon>
        <taxon>Ecdysozoa</taxon>
        <taxon>Arthropoda</taxon>
        <taxon>Hexapoda</taxon>
        <taxon>Insecta</taxon>
        <taxon>Pterygota</taxon>
        <taxon>Neoptera</taxon>
        <taxon>Polyneoptera</taxon>
        <taxon>Mantophasmatodea</taxon>
        <taxon>Austrophasmatidae</taxon>
        <taxon>Karoophasma</taxon>
    </lineage>
</organism>
<name>PVK2_KARBO</name>
<reference evidence="5" key="1">
    <citation type="journal article" date="2012" name="Syst. Biol.">
        <title>Peptidomics-based phylogeny and biogeography of Mantophasmatodea (Hexapoda).</title>
        <authorList>
            <person name="Predel R."/>
            <person name="Neupert S."/>
            <person name="Huetteroth W."/>
            <person name="Kahnt J."/>
            <person name="Waidelich D."/>
            <person name="Roth S."/>
        </authorList>
    </citation>
    <scope>PROTEIN SEQUENCE</scope>
    <scope>AMIDATION AT VAL-19</scope>
    <source>
        <tissue evidence="3">Abdominal perisympathetic organs</tissue>
    </source>
</reference>
<sequence>SGLQFAVLDGQGFIPFSRV</sequence>
<dbReference type="GO" id="GO:0005576">
    <property type="term" value="C:extracellular region"/>
    <property type="evidence" value="ECO:0007669"/>
    <property type="project" value="UniProtKB-SubCell"/>
</dbReference>
<dbReference type="GO" id="GO:0007218">
    <property type="term" value="P:neuropeptide signaling pathway"/>
    <property type="evidence" value="ECO:0007669"/>
    <property type="project" value="UniProtKB-KW"/>
</dbReference>
<protein>
    <recommendedName>
        <fullName evidence="4">CAPA-Periviscerokinin-2</fullName>
        <shortName evidence="4">CAPA-PVK-2</shortName>
    </recommendedName>
</protein>
<proteinExistence type="evidence at protein level"/>